<gene>
    <name evidence="1" type="primary">hslV</name>
    <name type="ordered locus">CHU_1587</name>
</gene>
<protein>
    <recommendedName>
        <fullName evidence="1">ATP-dependent protease subunit HslV</fullName>
        <ecNumber evidence="1">3.4.25.2</ecNumber>
    </recommendedName>
</protein>
<accession>Q11UQ9</accession>
<name>HSLV_CYTH3</name>
<organism>
    <name type="scientific">Cytophaga hutchinsonii (strain ATCC 33406 / DSM 1761 / CIP 103989 / NBRC 15051 / NCIMB 9469 / D465)</name>
    <dbReference type="NCBI Taxonomy" id="269798"/>
    <lineage>
        <taxon>Bacteria</taxon>
        <taxon>Pseudomonadati</taxon>
        <taxon>Bacteroidota</taxon>
        <taxon>Cytophagia</taxon>
        <taxon>Cytophagales</taxon>
        <taxon>Cytophagaceae</taxon>
        <taxon>Cytophaga</taxon>
    </lineage>
</organism>
<dbReference type="EC" id="3.4.25.2" evidence="1"/>
<dbReference type="EMBL" id="CP000383">
    <property type="protein sequence ID" value="ABG58857.1"/>
    <property type="molecule type" value="Genomic_DNA"/>
</dbReference>
<dbReference type="RefSeq" id="WP_011584972.1">
    <property type="nucleotide sequence ID" value="NC_008255.1"/>
</dbReference>
<dbReference type="SMR" id="Q11UQ9"/>
<dbReference type="STRING" id="269798.CHU_1587"/>
<dbReference type="KEGG" id="chu:CHU_1587"/>
<dbReference type="eggNOG" id="COG5405">
    <property type="taxonomic scope" value="Bacteria"/>
</dbReference>
<dbReference type="HOGENOM" id="CLU_093872_1_0_10"/>
<dbReference type="OrthoDB" id="9804884at2"/>
<dbReference type="Proteomes" id="UP000001822">
    <property type="component" value="Chromosome"/>
</dbReference>
<dbReference type="GO" id="GO:0009376">
    <property type="term" value="C:HslUV protease complex"/>
    <property type="evidence" value="ECO:0007669"/>
    <property type="project" value="UniProtKB-UniRule"/>
</dbReference>
<dbReference type="GO" id="GO:0005839">
    <property type="term" value="C:proteasome core complex"/>
    <property type="evidence" value="ECO:0007669"/>
    <property type="project" value="InterPro"/>
</dbReference>
<dbReference type="GO" id="GO:0046872">
    <property type="term" value="F:metal ion binding"/>
    <property type="evidence" value="ECO:0007669"/>
    <property type="project" value="UniProtKB-KW"/>
</dbReference>
<dbReference type="GO" id="GO:0004298">
    <property type="term" value="F:threonine-type endopeptidase activity"/>
    <property type="evidence" value="ECO:0007669"/>
    <property type="project" value="UniProtKB-KW"/>
</dbReference>
<dbReference type="GO" id="GO:0051603">
    <property type="term" value="P:proteolysis involved in protein catabolic process"/>
    <property type="evidence" value="ECO:0007669"/>
    <property type="project" value="InterPro"/>
</dbReference>
<dbReference type="CDD" id="cd01913">
    <property type="entry name" value="protease_HslV"/>
    <property type="match status" value="1"/>
</dbReference>
<dbReference type="Gene3D" id="3.60.20.10">
    <property type="entry name" value="Glutamine Phosphoribosylpyrophosphate, subunit 1, domain 1"/>
    <property type="match status" value="1"/>
</dbReference>
<dbReference type="HAMAP" id="MF_00248">
    <property type="entry name" value="HslV"/>
    <property type="match status" value="1"/>
</dbReference>
<dbReference type="InterPro" id="IPR022281">
    <property type="entry name" value="ATP-dep_Prtase_HsIV_su"/>
</dbReference>
<dbReference type="InterPro" id="IPR029055">
    <property type="entry name" value="Ntn_hydrolases_N"/>
</dbReference>
<dbReference type="InterPro" id="IPR001353">
    <property type="entry name" value="Proteasome_sua/b"/>
</dbReference>
<dbReference type="InterPro" id="IPR023333">
    <property type="entry name" value="Proteasome_suB-type"/>
</dbReference>
<dbReference type="NCBIfam" id="TIGR03692">
    <property type="entry name" value="ATP_dep_HslV"/>
    <property type="match status" value="1"/>
</dbReference>
<dbReference type="NCBIfam" id="NF003964">
    <property type="entry name" value="PRK05456.1"/>
    <property type="match status" value="1"/>
</dbReference>
<dbReference type="PANTHER" id="PTHR32194:SF0">
    <property type="entry name" value="ATP-DEPENDENT PROTEASE SUBUNIT HSLV"/>
    <property type="match status" value="1"/>
</dbReference>
<dbReference type="PANTHER" id="PTHR32194">
    <property type="entry name" value="METALLOPROTEASE TLDD"/>
    <property type="match status" value="1"/>
</dbReference>
<dbReference type="Pfam" id="PF00227">
    <property type="entry name" value="Proteasome"/>
    <property type="match status" value="1"/>
</dbReference>
<dbReference type="PIRSF" id="PIRSF039093">
    <property type="entry name" value="HslV"/>
    <property type="match status" value="1"/>
</dbReference>
<dbReference type="SUPFAM" id="SSF56235">
    <property type="entry name" value="N-terminal nucleophile aminohydrolases (Ntn hydrolases)"/>
    <property type="match status" value="1"/>
</dbReference>
<dbReference type="PROSITE" id="PS51476">
    <property type="entry name" value="PROTEASOME_BETA_2"/>
    <property type="match status" value="1"/>
</dbReference>
<proteinExistence type="inferred from homology"/>
<comment type="function">
    <text evidence="1">Protease subunit of a proteasome-like degradation complex believed to be a general protein degrading machinery.</text>
</comment>
<comment type="catalytic activity">
    <reaction evidence="1">
        <text>ATP-dependent cleavage of peptide bonds with broad specificity.</text>
        <dbReference type="EC" id="3.4.25.2"/>
    </reaction>
</comment>
<comment type="activity regulation">
    <text evidence="1">Allosterically activated by HslU binding.</text>
</comment>
<comment type="subunit">
    <text evidence="1">A double ring-shaped homohexamer of HslV is capped on each side by a ring-shaped HslU homohexamer. The assembly of the HslU/HslV complex is dependent on binding of ATP.</text>
</comment>
<comment type="subcellular location">
    <subcellularLocation>
        <location evidence="1">Cytoplasm</location>
    </subcellularLocation>
</comment>
<comment type="similarity">
    <text evidence="1">Belongs to the peptidase T1B family. HslV subfamily.</text>
</comment>
<evidence type="ECO:0000255" key="1">
    <source>
        <dbReference type="HAMAP-Rule" id="MF_00248"/>
    </source>
</evidence>
<feature type="chain" id="PRO_0000336770" description="ATP-dependent protease subunit HslV">
    <location>
        <begin position="1"/>
        <end position="180"/>
    </location>
</feature>
<feature type="active site" evidence="1">
    <location>
        <position position="7"/>
    </location>
</feature>
<feature type="binding site" evidence="1">
    <location>
        <position position="163"/>
    </location>
    <ligand>
        <name>Na(+)</name>
        <dbReference type="ChEBI" id="CHEBI:29101"/>
    </ligand>
</feature>
<feature type="binding site" evidence="1">
    <location>
        <position position="166"/>
    </location>
    <ligand>
        <name>Na(+)</name>
        <dbReference type="ChEBI" id="CHEBI:29101"/>
    </ligand>
</feature>
<feature type="binding site" evidence="1">
    <location>
        <position position="169"/>
    </location>
    <ligand>
        <name>Na(+)</name>
        <dbReference type="ChEBI" id="CHEBI:29101"/>
    </ligand>
</feature>
<reference key="1">
    <citation type="journal article" date="2007" name="Appl. Environ. Microbiol.">
        <title>Genome sequence of the cellulolytic gliding bacterium Cytophaga hutchinsonii.</title>
        <authorList>
            <person name="Xie G."/>
            <person name="Bruce D.C."/>
            <person name="Challacombe J.F."/>
            <person name="Chertkov O."/>
            <person name="Detter J.C."/>
            <person name="Gilna P."/>
            <person name="Han C.S."/>
            <person name="Lucas S."/>
            <person name="Misra M."/>
            <person name="Myers G.L."/>
            <person name="Richardson P."/>
            <person name="Tapia R."/>
            <person name="Thayer N."/>
            <person name="Thompson L.S."/>
            <person name="Brettin T.S."/>
            <person name="Henrissat B."/>
            <person name="Wilson D.B."/>
            <person name="McBride M.J."/>
        </authorList>
    </citation>
    <scope>NUCLEOTIDE SEQUENCE [LARGE SCALE GENOMIC DNA]</scope>
    <source>
        <strain>ATCC 33406 / DSM 1761 / JCM 20678 / CIP 103989 / IAM 12607 / NBRC 15051 / NCIMB 9469 / D465</strain>
    </source>
</reference>
<sequence length="180" mass="19614">MEKIHATTVVAIRHNGQISIGADGQATLGNTVVKDYVKKVRKLMEGKVLCGFAGSTADAFTLLERFEEKLNTYAGNMKRAAIELAKDWRTDRYLRKLEAMMIVVNKDELLLISGTGDVIEPDNDILSIGSGSMYAQSAAAALKKHATHLSAPEMVRESLSIAADICIYTNHNFVIETAVA</sequence>
<keyword id="KW-0021">Allosteric enzyme</keyword>
<keyword id="KW-0963">Cytoplasm</keyword>
<keyword id="KW-0378">Hydrolase</keyword>
<keyword id="KW-0479">Metal-binding</keyword>
<keyword id="KW-0645">Protease</keyword>
<keyword id="KW-1185">Reference proteome</keyword>
<keyword id="KW-0915">Sodium</keyword>
<keyword id="KW-0346">Stress response</keyword>
<keyword id="KW-0888">Threonine protease</keyword>